<gene>
    <name evidence="2" type="primary">mutM</name>
    <name evidence="2" type="synonym">fpg</name>
    <name type="ordered locus">BAbS19_I20450</name>
</gene>
<name>FPG_BRUA1</name>
<evidence type="ECO:0000250" key="1"/>
<evidence type="ECO:0000255" key="2">
    <source>
        <dbReference type="HAMAP-Rule" id="MF_00103"/>
    </source>
</evidence>
<accession>B2S9T2</accession>
<proteinExistence type="inferred from homology"/>
<sequence length="293" mass="32006">MPELPEVETVRRGLQPFMEGATVVRVEQNRPDLRFAFPENFAERLSGRRIEALGRRAKYLTVHLDDGLSIISHLGMSGSFRIEAEDAQGLPGGFHHERSKNSLHDHVVFHLMRPDGASARIIYNDPRRFGFMLFAEKGALEEHPLLKDLGVEPTGNLLSGEVLAALFKGRRTPLKAALLDQRLIAGLGNIYVCEALWRPGLSPMRAAGSVAGEMDVMERLAGAIRSVIAQAIAAGGSSLKDYIQADGALGYFQHSFSVYGREGKPCRNPACGGTVERVVQSGRSTFFCASCQT</sequence>
<reference key="1">
    <citation type="journal article" date="2008" name="PLoS ONE">
        <title>Genome sequence of Brucella abortus vaccine strain S19 compared to virulent strains yields candidate virulence genes.</title>
        <authorList>
            <person name="Crasta O.R."/>
            <person name="Folkerts O."/>
            <person name="Fei Z."/>
            <person name="Mane S.P."/>
            <person name="Evans C."/>
            <person name="Martino-Catt S."/>
            <person name="Bricker B."/>
            <person name="Yu G."/>
            <person name="Du L."/>
            <person name="Sobral B.W."/>
        </authorList>
    </citation>
    <scope>NUCLEOTIDE SEQUENCE [LARGE SCALE GENOMIC DNA]</scope>
    <source>
        <strain>S19</strain>
    </source>
</reference>
<dbReference type="EC" id="3.2.2.23" evidence="2"/>
<dbReference type="EC" id="4.2.99.18" evidence="2"/>
<dbReference type="EMBL" id="CP000887">
    <property type="protein sequence ID" value="ACD73527.1"/>
    <property type="molecule type" value="Genomic_DNA"/>
</dbReference>
<dbReference type="RefSeq" id="WP_002965245.1">
    <property type="nucleotide sequence ID" value="NC_010742.1"/>
</dbReference>
<dbReference type="SMR" id="B2S9T2"/>
<dbReference type="GeneID" id="93017516"/>
<dbReference type="KEGG" id="bmc:BAbS19_I20450"/>
<dbReference type="HOGENOM" id="CLU_038423_1_1_5"/>
<dbReference type="Proteomes" id="UP000002565">
    <property type="component" value="Chromosome 1"/>
</dbReference>
<dbReference type="GO" id="GO:0034039">
    <property type="term" value="F:8-oxo-7,8-dihydroguanine DNA N-glycosylase activity"/>
    <property type="evidence" value="ECO:0007669"/>
    <property type="project" value="TreeGrafter"/>
</dbReference>
<dbReference type="GO" id="GO:0140078">
    <property type="term" value="F:class I DNA-(apurinic or apyrimidinic site) endonuclease activity"/>
    <property type="evidence" value="ECO:0007669"/>
    <property type="project" value="UniProtKB-EC"/>
</dbReference>
<dbReference type="GO" id="GO:0003684">
    <property type="term" value="F:damaged DNA binding"/>
    <property type="evidence" value="ECO:0007669"/>
    <property type="project" value="InterPro"/>
</dbReference>
<dbReference type="GO" id="GO:0008270">
    <property type="term" value="F:zinc ion binding"/>
    <property type="evidence" value="ECO:0007669"/>
    <property type="project" value="UniProtKB-UniRule"/>
</dbReference>
<dbReference type="GO" id="GO:0006284">
    <property type="term" value="P:base-excision repair"/>
    <property type="evidence" value="ECO:0007669"/>
    <property type="project" value="InterPro"/>
</dbReference>
<dbReference type="CDD" id="cd08966">
    <property type="entry name" value="EcFpg-like_N"/>
    <property type="match status" value="1"/>
</dbReference>
<dbReference type="FunFam" id="1.10.8.50:FF:000003">
    <property type="entry name" value="Formamidopyrimidine-DNA glycosylase"/>
    <property type="match status" value="1"/>
</dbReference>
<dbReference type="Gene3D" id="1.10.8.50">
    <property type="match status" value="1"/>
</dbReference>
<dbReference type="Gene3D" id="3.20.190.10">
    <property type="entry name" value="MutM-like, N-terminal"/>
    <property type="match status" value="1"/>
</dbReference>
<dbReference type="HAMAP" id="MF_00103">
    <property type="entry name" value="Fapy_DNA_glycosyl"/>
    <property type="match status" value="1"/>
</dbReference>
<dbReference type="InterPro" id="IPR015886">
    <property type="entry name" value="DNA_glyclase/AP_lyase_DNA-bd"/>
</dbReference>
<dbReference type="InterPro" id="IPR015887">
    <property type="entry name" value="DNA_glyclase_Znf_dom_DNA_BS"/>
</dbReference>
<dbReference type="InterPro" id="IPR020629">
    <property type="entry name" value="Formamido-pyr_DNA_Glyclase"/>
</dbReference>
<dbReference type="InterPro" id="IPR012319">
    <property type="entry name" value="FPG_cat"/>
</dbReference>
<dbReference type="InterPro" id="IPR035937">
    <property type="entry name" value="MutM-like_N-ter"/>
</dbReference>
<dbReference type="InterPro" id="IPR010979">
    <property type="entry name" value="Ribosomal_uS13-like_H2TH"/>
</dbReference>
<dbReference type="InterPro" id="IPR000214">
    <property type="entry name" value="Znf_DNA_glyclase/AP_lyase"/>
</dbReference>
<dbReference type="InterPro" id="IPR010663">
    <property type="entry name" value="Znf_FPG/IleRS"/>
</dbReference>
<dbReference type="NCBIfam" id="TIGR00577">
    <property type="entry name" value="fpg"/>
    <property type="match status" value="1"/>
</dbReference>
<dbReference type="NCBIfam" id="NF002211">
    <property type="entry name" value="PRK01103.1"/>
    <property type="match status" value="1"/>
</dbReference>
<dbReference type="PANTHER" id="PTHR22993">
    <property type="entry name" value="FORMAMIDOPYRIMIDINE-DNA GLYCOSYLASE"/>
    <property type="match status" value="1"/>
</dbReference>
<dbReference type="PANTHER" id="PTHR22993:SF9">
    <property type="entry name" value="FORMAMIDOPYRIMIDINE-DNA GLYCOSYLASE"/>
    <property type="match status" value="1"/>
</dbReference>
<dbReference type="Pfam" id="PF01149">
    <property type="entry name" value="Fapy_DNA_glyco"/>
    <property type="match status" value="1"/>
</dbReference>
<dbReference type="Pfam" id="PF06831">
    <property type="entry name" value="H2TH"/>
    <property type="match status" value="1"/>
</dbReference>
<dbReference type="Pfam" id="PF06827">
    <property type="entry name" value="zf-FPG_IleRS"/>
    <property type="match status" value="1"/>
</dbReference>
<dbReference type="SMART" id="SM00898">
    <property type="entry name" value="Fapy_DNA_glyco"/>
    <property type="match status" value="1"/>
</dbReference>
<dbReference type="SMART" id="SM01232">
    <property type="entry name" value="H2TH"/>
    <property type="match status" value="1"/>
</dbReference>
<dbReference type="SUPFAM" id="SSF57716">
    <property type="entry name" value="Glucocorticoid receptor-like (DNA-binding domain)"/>
    <property type="match status" value="1"/>
</dbReference>
<dbReference type="SUPFAM" id="SSF81624">
    <property type="entry name" value="N-terminal domain of MutM-like DNA repair proteins"/>
    <property type="match status" value="1"/>
</dbReference>
<dbReference type="SUPFAM" id="SSF46946">
    <property type="entry name" value="S13-like H2TH domain"/>
    <property type="match status" value="1"/>
</dbReference>
<dbReference type="PROSITE" id="PS51068">
    <property type="entry name" value="FPG_CAT"/>
    <property type="match status" value="1"/>
</dbReference>
<dbReference type="PROSITE" id="PS01242">
    <property type="entry name" value="ZF_FPG_1"/>
    <property type="match status" value="1"/>
</dbReference>
<dbReference type="PROSITE" id="PS51066">
    <property type="entry name" value="ZF_FPG_2"/>
    <property type="match status" value="1"/>
</dbReference>
<comment type="function">
    <text evidence="2">Involved in base excision repair of DNA damaged by oxidation or by mutagenic agents. Acts as a DNA glycosylase that recognizes and removes damaged bases. Has a preference for oxidized purines, such as 7,8-dihydro-8-oxoguanine (8-oxoG). Has AP (apurinic/apyrimidinic) lyase activity and introduces nicks in the DNA strand. Cleaves the DNA backbone by beta-delta elimination to generate a single-strand break at the site of the removed base with both 3'- and 5'-phosphates.</text>
</comment>
<comment type="catalytic activity">
    <reaction evidence="2">
        <text>Hydrolysis of DNA containing ring-opened 7-methylguanine residues, releasing 2,6-diamino-4-hydroxy-5-(N-methyl)formamidopyrimidine.</text>
        <dbReference type="EC" id="3.2.2.23"/>
    </reaction>
</comment>
<comment type="catalytic activity">
    <reaction evidence="2">
        <text>2'-deoxyribonucleotide-(2'-deoxyribose 5'-phosphate)-2'-deoxyribonucleotide-DNA = a 3'-end 2'-deoxyribonucleotide-(2,3-dehydro-2,3-deoxyribose 5'-phosphate)-DNA + a 5'-end 5'-phospho-2'-deoxyribonucleoside-DNA + H(+)</text>
        <dbReference type="Rhea" id="RHEA:66592"/>
        <dbReference type="Rhea" id="RHEA-COMP:13180"/>
        <dbReference type="Rhea" id="RHEA-COMP:16897"/>
        <dbReference type="Rhea" id="RHEA-COMP:17067"/>
        <dbReference type="ChEBI" id="CHEBI:15378"/>
        <dbReference type="ChEBI" id="CHEBI:136412"/>
        <dbReference type="ChEBI" id="CHEBI:157695"/>
        <dbReference type="ChEBI" id="CHEBI:167181"/>
        <dbReference type="EC" id="4.2.99.18"/>
    </reaction>
</comment>
<comment type="cofactor">
    <cofactor evidence="2">
        <name>Zn(2+)</name>
        <dbReference type="ChEBI" id="CHEBI:29105"/>
    </cofactor>
    <text evidence="2">Binds 1 zinc ion per subunit.</text>
</comment>
<comment type="subunit">
    <text evidence="2">Monomer.</text>
</comment>
<comment type="similarity">
    <text evidence="2">Belongs to the FPG family.</text>
</comment>
<keyword id="KW-0227">DNA damage</keyword>
<keyword id="KW-0234">DNA repair</keyword>
<keyword id="KW-0238">DNA-binding</keyword>
<keyword id="KW-0326">Glycosidase</keyword>
<keyword id="KW-0378">Hydrolase</keyword>
<keyword id="KW-0456">Lyase</keyword>
<keyword id="KW-0479">Metal-binding</keyword>
<keyword id="KW-0511">Multifunctional enzyme</keyword>
<keyword id="KW-0862">Zinc</keyword>
<keyword id="KW-0863">Zinc-finger</keyword>
<feature type="initiator methionine" description="Removed" evidence="1">
    <location>
        <position position="1"/>
    </location>
</feature>
<feature type="chain" id="PRO_1000094032" description="Formamidopyrimidine-DNA glycosylase">
    <location>
        <begin position="2"/>
        <end position="293"/>
    </location>
</feature>
<feature type="zinc finger region" description="FPG-type" evidence="2">
    <location>
        <begin position="257"/>
        <end position="293"/>
    </location>
</feature>
<feature type="active site" description="Schiff-base intermediate with DNA" evidence="2">
    <location>
        <position position="2"/>
    </location>
</feature>
<feature type="active site" description="Proton donor" evidence="2">
    <location>
        <position position="3"/>
    </location>
</feature>
<feature type="active site" description="Proton donor; for beta-elimination activity" evidence="2">
    <location>
        <position position="58"/>
    </location>
</feature>
<feature type="active site" description="Proton donor; for delta-elimination activity" evidence="2">
    <location>
        <position position="283"/>
    </location>
</feature>
<feature type="binding site" evidence="2">
    <location>
        <position position="104"/>
    </location>
    <ligand>
        <name>DNA</name>
        <dbReference type="ChEBI" id="CHEBI:16991"/>
    </ligand>
</feature>
<feature type="binding site" evidence="2">
    <location>
        <position position="127"/>
    </location>
    <ligand>
        <name>DNA</name>
        <dbReference type="ChEBI" id="CHEBI:16991"/>
    </ligand>
</feature>
<feature type="binding site" evidence="2">
    <location>
        <position position="170"/>
    </location>
    <ligand>
        <name>DNA</name>
        <dbReference type="ChEBI" id="CHEBI:16991"/>
    </ligand>
</feature>
<organism>
    <name type="scientific">Brucella abortus (strain S19)</name>
    <dbReference type="NCBI Taxonomy" id="430066"/>
    <lineage>
        <taxon>Bacteria</taxon>
        <taxon>Pseudomonadati</taxon>
        <taxon>Pseudomonadota</taxon>
        <taxon>Alphaproteobacteria</taxon>
        <taxon>Hyphomicrobiales</taxon>
        <taxon>Brucellaceae</taxon>
        <taxon>Brucella/Ochrobactrum group</taxon>
        <taxon>Brucella</taxon>
    </lineage>
</organism>
<protein>
    <recommendedName>
        <fullName evidence="2">Formamidopyrimidine-DNA glycosylase</fullName>
        <shortName evidence="2">Fapy-DNA glycosylase</shortName>
        <ecNumber evidence="2">3.2.2.23</ecNumber>
    </recommendedName>
    <alternativeName>
        <fullName evidence="2">DNA-(apurinic or apyrimidinic site) lyase MutM</fullName>
        <shortName evidence="2">AP lyase MutM</shortName>
        <ecNumber evidence="2">4.2.99.18</ecNumber>
    </alternativeName>
</protein>